<dbReference type="EC" id="4.3.2.3" evidence="1"/>
<dbReference type="EMBL" id="AF317836">
    <property type="protein sequence ID" value="AAK06708.1"/>
    <property type="molecule type" value="Genomic_DNA"/>
</dbReference>
<dbReference type="SMR" id="Q9AP01"/>
<dbReference type="STRING" id="292.WI67_03010"/>
<dbReference type="KEGG" id="bced:DM42_1195"/>
<dbReference type="eggNOG" id="COG3194">
    <property type="taxonomic scope" value="Bacteria"/>
</dbReference>
<dbReference type="UniPathway" id="UPA00395"/>
<dbReference type="GO" id="GO:0004848">
    <property type="term" value="F:ureidoglycolate hydrolase activity"/>
    <property type="evidence" value="ECO:0007669"/>
    <property type="project" value="InterPro"/>
</dbReference>
<dbReference type="GO" id="GO:0050385">
    <property type="term" value="F:ureidoglycolate lyase activity"/>
    <property type="evidence" value="ECO:0007669"/>
    <property type="project" value="UniProtKB-UniRule"/>
</dbReference>
<dbReference type="GO" id="GO:0000256">
    <property type="term" value="P:allantoin catabolic process"/>
    <property type="evidence" value="ECO:0007669"/>
    <property type="project" value="UniProtKB-UniRule"/>
</dbReference>
<dbReference type="GO" id="GO:0006145">
    <property type="term" value="P:purine nucleobase catabolic process"/>
    <property type="evidence" value="ECO:0007669"/>
    <property type="project" value="UniProtKB-UniRule"/>
</dbReference>
<dbReference type="CDD" id="cd20298">
    <property type="entry name" value="cupin_UAH"/>
    <property type="match status" value="1"/>
</dbReference>
<dbReference type="Gene3D" id="2.60.120.480">
    <property type="entry name" value="Ureidoglycolate hydrolase"/>
    <property type="match status" value="1"/>
</dbReference>
<dbReference type="HAMAP" id="MF_00616">
    <property type="entry name" value="Ureidogly_lyase"/>
    <property type="match status" value="1"/>
</dbReference>
<dbReference type="InterPro" id="IPR011051">
    <property type="entry name" value="RmlC_Cupin_sf"/>
</dbReference>
<dbReference type="InterPro" id="IPR047233">
    <property type="entry name" value="UAH_cupin"/>
</dbReference>
<dbReference type="InterPro" id="IPR007247">
    <property type="entry name" value="Ureidogly_lyase"/>
</dbReference>
<dbReference type="InterPro" id="IPR023525">
    <property type="entry name" value="Ureidogly_lyase_bac"/>
</dbReference>
<dbReference type="InterPro" id="IPR024060">
    <property type="entry name" value="Ureidoglycolate_lyase_dom_sf"/>
</dbReference>
<dbReference type="NCBIfam" id="NF009932">
    <property type="entry name" value="PRK13395.1"/>
    <property type="match status" value="1"/>
</dbReference>
<dbReference type="PANTHER" id="PTHR21221">
    <property type="entry name" value="UREIDOGLYCOLATE HYDROLASE"/>
    <property type="match status" value="1"/>
</dbReference>
<dbReference type="PANTHER" id="PTHR21221:SF1">
    <property type="entry name" value="UREIDOGLYCOLATE LYASE"/>
    <property type="match status" value="1"/>
</dbReference>
<dbReference type="Pfam" id="PF04115">
    <property type="entry name" value="Ureidogly_lyase"/>
    <property type="match status" value="1"/>
</dbReference>
<dbReference type="PIRSF" id="PIRSF017306">
    <property type="entry name" value="Ureidogly_hydro"/>
    <property type="match status" value="1"/>
</dbReference>
<dbReference type="SUPFAM" id="SSF51182">
    <property type="entry name" value="RmlC-like cupins"/>
    <property type="match status" value="1"/>
</dbReference>
<reference key="1">
    <citation type="journal article" date="2001" name="Microbiology">
        <title>The Burkholderia cepacia fur gene: co-localization with omlA and absence of regulation by iron.</title>
        <authorList>
            <person name="Lowe C.A."/>
            <person name="Asghar A.H."/>
            <person name="Shalom G."/>
            <person name="Shaw J.G."/>
            <person name="Thomas M.S."/>
        </authorList>
    </citation>
    <scope>NUCLEOTIDE SEQUENCE [GENOMIC DNA]</scope>
    <source>
        <strain>715j</strain>
    </source>
</reference>
<keyword id="KW-0456">Lyase</keyword>
<keyword id="KW-0659">Purine metabolism</keyword>
<name>ALLA_BURCE</name>
<feature type="chain" id="PRO_0000120546" description="Ureidoglycolate lyase">
    <location>
        <begin position="1"/>
        <end position="177"/>
    </location>
</feature>
<comment type="function">
    <text evidence="1">Catalyzes the catabolism of the allantoin degradation intermediate (S)-ureidoglycolate, generating urea and glyoxylate. Involved in the utilization of allantoin as nitrogen source.</text>
</comment>
<comment type="catalytic activity">
    <reaction evidence="1">
        <text>(S)-ureidoglycolate = urea + glyoxylate</text>
        <dbReference type="Rhea" id="RHEA:11304"/>
        <dbReference type="ChEBI" id="CHEBI:16199"/>
        <dbReference type="ChEBI" id="CHEBI:36655"/>
        <dbReference type="ChEBI" id="CHEBI:57296"/>
        <dbReference type="EC" id="4.3.2.3"/>
    </reaction>
</comment>
<comment type="cofactor">
    <cofactor evidence="1">
        <name>Ni(2+)</name>
        <dbReference type="ChEBI" id="CHEBI:49786"/>
    </cofactor>
</comment>
<comment type="pathway">
    <text evidence="1">Nitrogen metabolism; (S)-allantoin degradation.</text>
</comment>
<comment type="subunit">
    <text evidence="1">Homodimer.</text>
</comment>
<comment type="similarity">
    <text evidence="1">Belongs to the ureidoglycolate lyase family.</text>
</comment>
<gene>
    <name evidence="1" type="primary">allA</name>
</gene>
<protein>
    <recommendedName>
        <fullName evidence="1">Ureidoglycolate lyase</fullName>
        <ecNumber evidence="1">4.3.2.3</ecNumber>
    </recommendedName>
    <alternativeName>
        <fullName evidence="1">Ureidoglycolatase</fullName>
    </alternativeName>
</protein>
<accession>Q9AP01</accession>
<sequence>MSGTPILRVERLTREAFAPFGDVIALEGARHFPINGGTTERFHDLATIDVCADGGRPLVSVFRAQPRAVPVAITLMERHPHGSQAFIPLAAVSRYAIVVAPAGEFRPDAMRAFLAEGWQGVNYAKGVWHHPLLALDAVSDFVIVDRGGPQPNCDEIPLECAWALEFEPACAGAEGLS</sequence>
<organism>
    <name type="scientific">Burkholderia cepacia</name>
    <name type="common">Pseudomonas cepacia</name>
    <dbReference type="NCBI Taxonomy" id="292"/>
    <lineage>
        <taxon>Bacteria</taxon>
        <taxon>Pseudomonadati</taxon>
        <taxon>Pseudomonadota</taxon>
        <taxon>Betaproteobacteria</taxon>
        <taxon>Burkholderiales</taxon>
        <taxon>Burkholderiaceae</taxon>
        <taxon>Burkholderia</taxon>
        <taxon>Burkholderia cepacia complex</taxon>
    </lineage>
</organism>
<evidence type="ECO:0000255" key="1">
    <source>
        <dbReference type="HAMAP-Rule" id="MF_00616"/>
    </source>
</evidence>
<proteinExistence type="inferred from homology"/>